<feature type="chain" id="PRO_0000310150" description="Probable nicotinate-nucleotide adenylyltransferase">
    <location>
        <begin position="1"/>
        <end position="189"/>
    </location>
</feature>
<dbReference type="EC" id="2.7.7.18" evidence="1"/>
<dbReference type="EMBL" id="AJ938182">
    <property type="protein sequence ID" value="CAI81155.1"/>
    <property type="molecule type" value="Genomic_DNA"/>
</dbReference>
<dbReference type="RefSeq" id="WP_000725166.1">
    <property type="nucleotide sequence ID" value="NC_007622.1"/>
</dbReference>
<dbReference type="SMR" id="Q2YT34"/>
<dbReference type="KEGG" id="sab:SAB1466c"/>
<dbReference type="HOGENOM" id="CLU_069765_3_1_9"/>
<dbReference type="UniPathway" id="UPA00253">
    <property type="reaction ID" value="UER00332"/>
</dbReference>
<dbReference type="GO" id="GO:0005524">
    <property type="term" value="F:ATP binding"/>
    <property type="evidence" value="ECO:0007669"/>
    <property type="project" value="UniProtKB-KW"/>
</dbReference>
<dbReference type="GO" id="GO:0004515">
    <property type="term" value="F:nicotinate-nucleotide adenylyltransferase activity"/>
    <property type="evidence" value="ECO:0007669"/>
    <property type="project" value="UniProtKB-UniRule"/>
</dbReference>
<dbReference type="GO" id="GO:0009435">
    <property type="term" value="P:NAD biosynthetic process"/>
    <property type="evidence" value="ECO:0007669"/>
    <property type="project" value="UniProtKB-UniRule"/>
</dbReference>
<dbReference type="CDD" id="cd02165">
    <property type="entry name" value="NMNAT"/>
    <property type="match status" value="1"/>
</dbReference>
<dbReference type="Gene3D" id="3.40.50.620">
    <property type="entry name" value="HUPs"/>
    <property type="match status" value="1"/>
</dbReference>
<dbReference type="HAMAP" id="MF_00244">
    <property type="entry name" value="NaMN_adenylyltr"/>
    <property type="match status" value="1"/>
</dbReference>
<dbReference type="InterPro" id="IPR004821">
    <property type="entry name" value="Cyt_trans-like"/>
</dbReference>
<dbReference type="InterPro" id="IPR005248">
    <property type="entry name" value="NadD/NMNAT"/>
</dbReference>
<dbReference type="InterPro" id="IPR014729">
    <property type="entry name" value="Rossmann-like_a/b/a_fold"/>
</dbReference>
<dbReference type="NCBIfam" id="TIGR00482">
    <property type="entry name" value="nicotinate (nicotinamide) nucleotide adenylyltransferase"/>
    <property type="match status" value="1"/>
</dbReference>
<dbReference type="NCBIfam" id="NF000840">
    <property type="entry name" value="PRK00071.1-3"/>
    <property type="match status" value="1"/>
</dbReference>
<dbReference type="NCBIfam" id="NF000841">
    <property type="entry name" value="PRK00071.1-4"/>
    <property type="match status" value="1"/>
</dbReference>
<dbReference type="PANTHER" id="PTHR39321">
    <property type="entry name" value="NICOTINATE-NUCLEOTIDE ADENYLYLTRANSFERASE-RELATED"/>
    <property type="match status" value="1"/>
</dbReference>
<dbReference type="PANTHER" id="PTHR39321:SF3">
    <property type="entry name" value="PHOSPHOPANTETHEINE ADENYLYLTRANSFERASE"/>
    <property type="match status" value="1"/>
</dbReference>
<dbReference type="Pfam" id="PF01467">
    <property type="entry name" value="CTP_transf_like"/>
    <property type="match status" value="1"/>
</dbReference>
<dbReference type="SUPFAM" id="SSF52374">
    <property type="entry name" value="Nucleotidylyl transferase"/>
    <property type="match status" value="1"/>
</dbReference>
<protein>
    <recommendedName>
        <fullName evidence="1">Probable nicotinate-nucleotide adenylyltransferase</fullName>
        <ecNumber evidence="1">2.7.7.18</ecNumber>
    </recommendedName>
    <alternativeName>
        <fullName evidence="1">Deamido-NAD(+) diphosphorylase</fullName>
    </alternativeName>
    <alternativeName>
        <fullName evidence="1">Deamido-NAD(+) pyrophosphorylase</fullName>
    </alternativeName>
    <alternativeName>
        <fullName evidence="1">Nicotinate mononucleotide adenylyltransferase</fullName>
        <shortName evidence="1">NaMN adenylyltransferase</shortName>
    </alternativeName>
</protein>
<sequence>MKKIVLYGGQFNPIHTAHMIVASEVFHELQPDEFYFLPSFMSPLKKHNNFIDVQHRLTMIQMIIDELGFGDICDDEIKRGGQSYTYDTIKAFKEQHKDSELYFVIGTDQYNQLEKWYQIEYLKEMVTFVVVNRDKNSQNVDNAMIAIQIPRVDISSTMIRQRVSEGKSIQVLVPKSVENYIKGEGLYEH</sequence>
<gene>
    <name evidence="1" type="primary">nadD</name>
    <name type="ordered locus">SAB1466c</name>
</gene>
<reference key="1">
    <citation type="journal article" date="2007" name="PLoS ONE">
        <title>Molecular correlates of host specialization in Staphylococcus aureus.</title>
        <authorList>
            <person name="Herron-Olson L."/>
            <person name="Fitzgerald J.R."/>
            <person name="Musser J.M."/>
            <person name="Kapur V."/>
        </authorList>
    </citation>
    <scope>NUCLEOTIDE SEQUENCE [LARGE SCALE GENOMIC DNA]</scope>
    <source>
        <strain>bovine RF122 / ET3-1</strain>
    </source>
</reference>
<name>NADD_STAAB</name>
<proteinExistence type="inferred from homology"/>
<accession>Q2YT34</accession>
<organism>
    <name type="scientific">Staphylococcus aureus (strain bovine RF122 / ET3-1)</name>
    <dbReference type="NCBI Taxonomy" id="273036"/>
    <lineage>
        <taxon>Bacteria</taxon>
        <taxon>Bacillati</taxon>
        <taxon>Bacillota</taxon>
        <taxon>Bacilli</taxon>
        <taxon>Bacillales</taxon>
        <taxon>Staphylococcaceae</taxon>
        <taxon>Staphylococcus</taxon>
    </lineage>
</organism>
<evidence type="ECO:0000255" key="1">
    <source>
        <dbReference type="HAMAP-Rule" id="MF_00244"/>
    </source>
</evidence>
<keyword id="KW-0067">ATP-binding</keyword>
<keyword id="KW-0520">NAD</keyword>
<keyword id="KW-0547">Nucleotide-binding</keyword>
<keyword id="KW-0548">Nucleotidyltransferase</keyword>
<keyword id="KW-0662">Pyridine nucleotide biosynthesis</keyword>
<keyword id="KW-0808">Transferase</keyword>
<comment type="function">
    <text evidence="1">Catalyzes the reversible adenylation of nicotinate mononucleotide (NaMN) to nicotinic acid adenine dinucleotide (NaAD).</text>
</comment>
<comment type="catalytic activity">
    <reaction evidence="1">
        <text>nicotinate beta-D-ribonucleotide + ATP + H(+) = deamido-NAD(+) + diphosphate</text>
        <dbReference type="Rhea" id="RHEA:22860"/>
        <dbReference type="ChEBI" id="CHEBI:15378"/>
        <dbReference type="ChEBI" id="CHEBI:30616"/>
        <dbReference type="ChEBI" id="CHEBI:33019"/>
        <dbReference type="ChEBI" id="CHEBI:57502"/>
        <dbReference type="ChEBI" id="CHEBI:58437"/>
        <dbReference type="EC" id="2.7.7.18"/>
    </reaction>
</comment>
<comment type="pathway">
    <text evidence="1">Cofactor biosynthesis; NAD(+) biosynthesis; deamido-NAD(+) from nicotinate D-ribonucleotide: step 1/1.</text>
</comment>
<comment type="similarity">
    <text evidence="1">Belongs to the NadD family.</text>
</comment>